<dbReference type="EC" id="1.7.99.1" evidence="1"/>
<dbReference type="EMBL" id="AE014299">
    <property type="protein sequence ID" value="AAN54428.1"/>
    <property type="molecule type" value="Genomic_DNA"/>
</dbReference>
<dbReference type="RefSeq" id="NP_716983.1">
    <property type="nucleotide sequence ID" value="NC_004347.2"/>
</dbReference>
<dbReference type="RefSeq" id="WP_011071571.1">
    <property type="nucleotide sequence ID" value="NC_004347.2"/>
</dbReference>
<dbReference type="SMR" id="Q8EH67"/>
<dbReference type="STRING" id="211586.SO_1363"/>
<dbReference type="PaxDb" id="211586-SO_1363"/>
<dbReference type="KEGG" id="son:SO_1363"/>
<dbReference type="PATRIC" id="fig|211586.12.peg.1312"/>
<dbReference type="eggNOG" id="COG1151">
    <property type="taxonomic scope" value="Bacteria"/>
</dbReference>
<dbReference type="HOGENOM" id="CLU_038344_2_0_6"/>
<dbReference type="OrthoDB" id="9761526at2"/>
<dbReference type="PhylomeDB" id="Q8EH67"/>
<dbReference type="BioCyc" id="SONE211586:G1GMP-1261-MONOMER"/>
<dbReference type="Proteomes" id="UP000008186">
    <property type="component" value="Chromosome"/>
</dbReference>
<dbReference type="GO" id="GO:0005737">
    <property type="term" value="C:cytoplasm"/>
    <property type="evidence" value="ECO:0007669"/>
    <property type="project" value="UniProtKB-SubCell"/>
</dbReference>
<dbReference type="GO" id="GO:0051537">
    <property type="term" value="F:2 iron, 2 sulfur cluster binding"/>
    <property type="evidence" value="ECO:0007669"/>
    <property type="project" value="UniProtKB-KW"/>
</dbReference>
<dbReference type="GO" id="GO:0050418">
    <property type="term" value="F:hydroxylamine reductase activity"/>
    <property type="evidence" value="ECO:0000318"/>
    <property type="project" value="GO_Central"/>
</dbReference>
<dbReference type="GO" id="GO:0046872">
    <property type="term" value="F:metal ion binding"/>
    <property type="evidence" value="ECO:0007669"/>
    <property type="project" value="UniProtKB-KW"/>
</dbReference>
<dbReference type="GO" id="GO:0004601">
    <property type="term" value="F:peroxidase activity"/>
    <property type="evidence" value="ECO:0000318"/>
    <property type="project" value="GO_Central"/>
</dbReference>
<dbReference type="GO" id="GO:0046210">
    <property type="term" value="P:nitric oxide catabolic process"/>
    <property type="evidence" value="ECO:0000318"/>
    <property type="project" value="GO_Central"/>
</dbReference>
<dbReference type="GO" id="GO:0042542">
    <property type="term" value="P:response to hydrogen peroxide"/>
    <property type="evidence" value="ECO:0000318"/>
    <property type="project" value="GO_Central"/>
</dbReference>
<dbReference type="CDD" id="cd01914">
    <property type="entry name" value="HCP"/>
    <property type="match status" value="1"/>
</dbReference>
<dbReference type="FunFam" id="1.20.1270.20:FF:000001">
    <property type="entry name" value="Hydroxylamine reductase"/>
    <property type="match status" value="1"/>
</dbReference>
<dbReference type="FunFam" id="1.20.1270.20:FF:000002">
    <property type="entry name" value="Hydroxylamine reductase"/>
    <property type="match status" value="1"/>
</dbReference>
<dbReference type="FunFam" id="3.40.50.2030:FF:000001">
    <property type="entry name" value="Hydroxylamine reductase"/>
    <property type="match status" value="1"/>
</dbReference>
<dbReference type="FunFam" id="3.40.50.2030:FF:000002">
    <property type="entry name" value="Hydroxylamine reductase"/>
    <property type="match status" value="1"/>
</dbReference>
<dbReference type="Gene3D" id="1.20.1270.20">
    <property type="match status" value="2"/>
</dbReference>
<dbReference type="Gene3D" id="3.40.50.2030">
    <property type="match status" value="2"/>
</dbReference>
<dbReference type="HAMAP" id="MF_00069">
    <property type="entry name" value="Hydroxylam_reduct"/>
    <property type="match status" value="1"/>
</dbReference>
<dbReference type="InterPro" id="IPR004137">
    <property type="entry name" value="HCP/CODH"/>
</dbReference>
<dbReference type="InterPro" id="IPR010048">
    <property type="entry name" value="Hydroxylam_reduct"/>
</dbReference>
<dbReference type="InterPro" id="IPR016099">
    <property type="entry name" value="Prismane-like_a/b-sand"/>
</dbReference>
<dbReference type="InterPro" id="IPR011254">
    <property type="entry name" value="Prismane-like_sf"/>
</dbReference>
<dbReference type="InterPro" id="IPR016100">
    <property type="entry name" value="Prismane_a-bundle"/>
</dbReference>
<dbReference type="NCBIfam" id="TIGR01703">
    <property type="entry name" value="hybrid_clust"/>
    <property type="match status" value="1"/>
</dbReference>
<dbReference type="NCBIfam" id="NF003658">
    <property type="entry name" value="PRK05290.1"/>
    <property type="match status" value="1"/>
</dbReference>
<dbReference type="PANTHER" id="PTHR30109">
    <property type="entry name" value="HYDROXYLAMINE REDUCTASE"/>
    <property type="match status" value="1"/>
</dbReference>
<dbReference type="PANTHER" id="PTHR30109:SF0">
    <property type="entry name" value="HYDROXYLAMINE REDUCTASE"/>
    <property type="match status" value="1"/>
</dbReference>
<dbReference type="Pfam" id="PF03063">
    <property type="entry name" value="Prismane"/>
    <property type="match status" value="1"/>
</dbReference>
<dbReference type="PIRSF" id="PIRSF000076">
    <property type="entry name" value="HCP"/>
    <property type="match status" value="1"/>
</dbReference>
<dbReference type="SUPFAM" id="SSF56821">
    <property type="entry name" value="Prismane protein-like"/>
    <property type="match status" value="1"/>
</dbReference>
<sequence>MFCIQCEQTIRTPAGNGCSYAQGMCGKLAATSDLQDLLIYMLQGVSVYAVKARELGVVDTEVDTFVPKAFFSTLTNVNFDDERIIAYAKQAAQYRESLKNAYEATCEQSGKTAEQMPPVAQLVLGTSKLEMLSQAPISLLNKDKNNIHEDILGLRLLCLYGLKGAAAYMEHARVLGKTDVDIAADFHRIMAFLGEPSVDADKLFSTAMEIGQLNYRIMALLDAGETEAFGHPEPTVVNTKPVKGKAILVSGHDMKDLELILEQTAGKGINVYTHGEMLPALAYPAFKKYPHLVGNYGSAWQNQQKEFANFPGAVVMTSNCIIDPNVGQYSDRIFTRSIVGWPGVVHVTGDDFSVVIEKALSNDGFHYDEIPHNITIGFARNALMAAAPTVVENVKNGSIKHFFLVGGCDGDKSERSYFTDLAKSAPKDSIILTLGCGKYKFNKLEFGDINGIPRLLDIGQCNDAYSAIQLAIALSQIFECDINELPLNLVLSWFEQKAIVVLLTLLSLGVKNIRTGPTPPAFLTANLAKILEDKFGLRNTTTVEADLKTMLNVA</sequence>
<evidence type="ECO:0000255" key="1">
    <source>
        <dbReference type="HAMAP-Rule" id="MF_00069"/>
    </source>
</evidence>
<feature type="chain" id="PRO_0000151682" description="Hydroxylamine reductase">
    <location>
        <begin position="1"/>
        <end position="554"/>
    </location>
</feature>
<feature type="binding site" evidence="1">
    <location>
        <position position="3"/>
    </location>
    <ligand>
        <name>[2Fe-2S] cluster</name>
        <dbReference type="ChEBI" id="CHEBI:190135"/>
    </ligand>
</feature>
<feature type="binding site" evidence="1">
    <location>
        <position position="6"/>
    </location>
    <ligand>
        <name>[2Fe-2S] cluster</name>
        <dbReference type="ChEBI" id="CHEBI:190135"/>
    </ligand>
</feature>
<feature type="binding site" evidence="1">
    <location>
        <position position="18"/>
    </location>
    <ligand>
        <name>[2Fe-2S] cluster</name>
        <dbReference type="ChEBI" id="CHEBI:190135"/>
    </ligand>
</feature>
<feature type="binding site" evidence="1">
    <location>
        <position position="25"/>
    </location>
    <ligand>
        <name>[2Fe-2S] cluster</name>
        <dbReference type="ChEBI" id="CHEBI:190135"/>
    </ligand>
</feature>
<feature type="binding site" evidence="1">
    <location>
        <position position="252"/>
    </location>
    <ligand>
        <name>hybrid [4Fe-2O-2S] cluster</name>
        <dbReference type="ChEBI" id="CHEBI:60519"/>
    </ligand>
</feature>
<feature type="binding site" evidence="1">
    <location>
        <position position="276"/>
    </location>
    <ligand>
        <name>hybrid [4Fe-2O-2S] cluster</name>
        <dbReference type="ChEBI" id="CHEBI:60519"/>
    </ligand>
</feature>
<feature type="binding site" evidence="1">
    <location>
        <position position="320"/>
    </location>
    <ligand>
        <name>hybrid [4Fe-2O-2S] cluster</name>
        <dbReference type="ChEBI" id="CHEBI:60519"/>
    </ligand>
</feature>
<feature type="binding site" description="via persulfide group" evidence="1">
    <location>
        <position position="408"/>
    </location>
    <ligand>
        <name>hybrid [4Fe-2O-2S] cluster</name>
        <dbReference type="ChEBI" id="CHEBI:60519"/>
    </ligand>
</feature>
<feature type="binding site" evidence="1">
    <location>
        <position position="436"/>
    </location>
    <ligand>
        <name>hybrid [4Fe-2O-2S] cluster</name>
        <dbReference type="ChEBI" id="CHEBI:60519"/>
    </ligand>
</feature>
<feature type="binding site" evidence="1">
    <location>
        <position position="461"/>
    </location>
    <ligand>
        <name>hybrid [4Fe-2O-2S] cluster</name>
        <dbReference type="ChEBI" id="CHEBI:60519"/>
    </ligand>
</feature>
<feature type="binding site" evidence="1">
    <location>
        <position position="495"/>
    </location>
    <ligand>
        <name>hybrid [4Fe-2O-2S] cluster</name>
        <dbReference type="ChEBI" id="CHEBI:60519"/>
    </ligand>
</feature>
<feature type="binding site" evidence="1">
    <location>
        <position position="497"/>
    </location>
    <ligand>
        <name>hybrid [4Fe-2O-2S] cluster</name>
        <dbReference type="ChEBI" id="CHEBI:60519"/>
    </ligand>
</feature>
<feature type="modified residue" description="Cysteine persulfide" evidence="1">
    <location>
        <position position="408"/>
    </location>
</feature>
<accession>Q8EH67</accession>
<proteinExistence type="inferred from homology"/>
<keyword id="KW-0001">2Fe-2S</keyword>
<keyword id="KW-0963">Cytoplasm</keyword>
<keyword id="KW-0408">Iron</keyword>
<keyword id="KW-0411">Iron-sulfur</keyword>
<keyword id="KW-0479">Metal-binding</keyword>
<keyword id="KW-0560">Oxidoreductase</keyword>
<keyword id="KW-1185">Reference proteome</keyword>
<comment type="function">
    <text evidence="1">Catalyzes the reduction of hydroxylamine to form NH(3) and H(2)O.</text>
</comment>
<comment type="catalytic activity">
    <reaction evidence="1">
        <text>A + NH4(+) + H2O = hydroxylamine + AH2 + H(+)</text>
        <dbReference type="Rhea" id="RHEA:22052"/>
        <dbReference type="ChEBI" id="CHEBI:13193"/>
        <dbReference type="ChEBI" id="CHEBI:15377"/>
        <dbReference type="ChEBI" id="CHEBI:15378"/>
        <dbReference type="ChEBI" id="CHEBI:15429"/>
        <dbReference type="ChEBI" id="CHEBI:17499"/>
        <dbReference type="ChEBI" id="CHEBI:28938"/>
        <dbReference type="EC" id="1.7.99.1"/>
    </reaction>
</comment>
<comment type="cofactor">
    <cofactor evidence="1">
        <name>[2Fe-2S] cluster</name>
        <dbReference type="ChEBI" id="CHEBI:190135"/>
    </cofactor>
    <text evidence="1">Binds 1 [2Fe-2S] cluster.</text>
</comment>
<comment type="cofactor">
    <cofactor evidence="1">
        <name>hybrid [4Fe-2O-2S] cluster</name>
        <dbReference type="ChEBI" id="CHEBI:60519"/>
    </cofactor>
    <text evidence="1">Binds 1 hybrid [4Fe-2O-2S] cluster.</text>
</comment>
<comment type="subcellular location">
    <subcellularLocation>
        <location evidence="1">Cytoplasm</location>
    </subcellularLocation>
</comment>
<comment type="similarity">
    <text evidence="1">Belongs to the HCP family.</text>
</comment>
<protein>
    <recommendedName>
        <fullName evidence="1">Hydroxylamine reductase</fullName>
        <ecNumber evidence="1">1.7.99.1</ecNumber>
    </recommendedName>
    <alternativeName>
        <fullName evidence="1">Hybrid-cluster protein</fullName>
        <shortName evidence="1">HCP</shortName>
    </alternativeName>
    <alternativeName>
        <fullName evidence="1">Prismane protein</fullName>
    </alternativeName>
</protein>
<name>HCP_SHEON</name>
<organism>
    <name type="scientific">Shewanella oneidensis (strain ATCC 700550 / JCM 31522 / CIP 106686 / LMG 19005 / NCIMB 14063 / MR-1)</name>
    <dbReference type="NCBI Taxonomy" id="211586"/>
    <lineage>
        <taxon>Bacteria</taxon>
        <taxon>Pseudomonadati</taxon>
        <taxon>Pseudomonadota</taxon>
        <taxon>Gammaproteobacteria</taxon>
        <taxon>Alteromonadales</taxon>
        <taxon>Shewanellaceae</taxon>
        <taxon>Shewanella</taxon>
    </lineage>
</organism>
<gene>
    <name evidence="1" type="primary">hcp</name>
    <name type="ordered locus">SO_1363</name>
</gene>
<reference key="1">
    <citation type="journal article" date="2002" name="Nat. Biotechnol.">
        <title>Genome sequence of the dissimilatory metal ion-reducing bacterium Shewanella oneidensis.</title>
        <authorList>
            <person name="Heidelberg J.F."/>
            <person name="Paulsen I.T."/>
            <person name="Nelson K.E."/>
            <person name="Gaidos E.J."/>
            <person name="Nelson W.C."/>
            <person name="Read T.D."/>
            <person name="Eisen J.A."/>
            <person name="Seshadri R."/>
            <person name="Ward N.L."/>
            <person name="Methe B.A."/>
            <person name="Clayton R.A."/>
            <person name="Meyer T."/>
            <person name="Tsapin A."/>
            <person name="Scott J."/>
            <person name="Beanan M.J."/>
            <person name="Brinkac L.M."/>
            <person name="Daugherty S.C."/>
            <person name="DeBoy R.T."/>
            <person name="Dodson R.J."/>
            <person name="Durkin A.S."/>
            <person name="Haft D.H."/>
            <person name="Kolonay J.F."/>
            <person name="Madupu R."/>
            <person name="Peterson J.D."/>
            <person name="Umayam L.A."/>
            <person name="White O."/>
            <person name="Wolf A.M."/>
            <person name="Vamathevan J.J."/>
            <person name="Weidman J.F."/>
            <person name="Impraim M."/>
            <person name="Lee K."/>
            <person name="Berry K.J."/>
            <person name="Lee C."/>
            <person name="Mueller J."/>
            <person name="Khouri H.M."/>
            <person name="Gill J."/>
            <person name="Utterback T.R."/>
            <person name="McDonald L.A."/>
            <person name="Feldblyum T.V."/>
            <person name="Smith H.O."/>
            <person name="Venter J.C."/>
            <person name="Nealson K.H."/>
            <person name="Fraser C.M."/>
        </authorList>
    </citation>
    <scope>NUCLEOTIDE SEQUENCE [LARGE SCALE GENOMIC DNA]</scope>
    <source>
        <strain>ATCC 700550 / JCM 31522 / CIP 106686 / LMG 19005 / NCIMB 14063 / MR-1</strain>
    </source>
</reference>